<gene>
    <name type="primary">set9</name>
    <name type="ORF">AO090011000851</name>
</gene>
<reference key="1">
    <citation type="journal article" date="2005" name="Nature">
        <title>Genome sequencing and analysis of Aspergillus oryzae.</title>
        <authorList>
            <person name="Machida M."/>
            <person name="Asai K."/>
            <person name="Sano M."/>
            <person name="Tanaka T."/>
            <person name="Kumagai T."/>
            <person name="Terai G."/>
            <person name="Kusumoto K."/>
            <person name="Arima T."/>
            <person name="Akita O."/>
            <person name="Kashiwagi Y."/>
            <person name="Abe K."/>
            <person name="Gomi K."/>
            <person name="Horiuchi H."/>
            <person name="Kitamoto K."/>
            <person name="Kobayashi T."/>
            <person name="Takeuchi M."/>
            <person name="Denning D.W."/>
            <person name="Galagan J.E."/>
            <person name="Nierman W.C."/>
            <person name="Yu J."/>
            <person name="Archer D.B."/>
            <person name="Bennett J.W."/>
            <person name="Bhatnagar D."/>
            <person name="Cleveland T.E."/>
            <person name="Fedorova N.D."/>
            <person name="Gotoh O."/>
            <person name="Horikawa H."/>
            <person name="Hosoyama A."/>
            <person name="Ichinomiya M."/>
            <person name="Igarashi R."/>
            <person name="Iwashita K."/>
            <person name="Juvvadi P.R."/>
            <person name="Kato M."/>
            <person name="Kato Y."/>
            <person name="Kin T."/>
            <person name="Kokubun A."/>
            <person name="Maeda H."/>
            <person name="Maeyama N."/>
            <person name="Maruyama J."/>
            <person name="Nagasaki H."/>
            <person name="Nakajima T."/>
            <person name="Oda K."/>
            <person name="Okada K."/>
            <person name="Paulsen I."/>
            <person name="Sakamoto K."/>
            <person name="Sawano T."/>
            <person name="Takahashi M."/>
            <person name="Takase K."/>
            <person name="Terabayashi Y."/>
            <person name="Wortman J.R."/>
            <person name="Yamada O."/>
            <person name="Yamagata Y."/>
            <person name="Anazawa H."/>
            <person name="Hata Y."/>
            <person name="Koide Y."/>
            <person name="Komori T."/>
            <person name="Koyama Y."/>
            <person name="Minetoki T."/>
            <person name="Suharnan S."/>
            <person name="Tanaka A."/>
            <person name="Isono K."/>
            <person name="Kuhara S."/>
            <person name="Ogasawara N."/>
            <person name="Kikuchi H."/>
        </authorList>
    </citation>
    <scope>NUCLEOTIDE SEQUENCE [LARGE SCALE GENOMIC DNA]</scope>
    <source>
        <strain>ATCC 42149 / RIB 40</strain>
    </source>
</reference>
<sequence length="625" mass="70383">MPSSKARDSPSVERRDRLTLAKLASYDDVATDALVDRAYFWTNTRKNRTKYIPVRGVHEDDVARILLHEVIVAKDSAQAEKQLLAMSGMKKYLAKLPNDREKEWFRRHLRKYIQMYLPDSPFEVTTTNRYTITEHEAAICARKFIKQGQEIKYLSGTLVPMTREEEQELDLKRKDFSIVMSSRRKTPSFFLGPARFANHDCNANGRLVTRGSEGMQVVATRDIYIGEEITVSYGDDYFGIDNCECLCLTCERAVRNGWAPHVDSEEGSSKASTPALNDEAISNDSLLSPRKRKHHLDSDSDISPSSTPRKRSKFTRQSSKLRSAVSLADFAPVGSGSDNPPPQAETSIVPETTGAASITNDTIVPASGSAVEVSQASATDCDSSPSLEADESHHSSTSTTPTSIGDVKIKVEDTVEASLTESASATHITLSITGQPHNDRHPPGTDNDMLSELSEITDNPQKPKRSRGSRWKHGVVPSVEEESHRVRVPGDYTKTSKLLAQAYDRWVDCHTCNVWFVQHNSYLTRRECPRCERHSMLYGFRWPKTDKEGSMDDEERVMDHRTVHRFLYPEEEARISRKDRGVSFGVTPTPELSEPRTETEDSEACDDRRNTRASRTRTRSLRMTM</sequence>
<evidence type="ECO:0000250" key="1"/>
<evidence type="ECO:0000250" key="2">
    <source>
        <dbReference type="UniProtKB" id="Q9USK2"/>
    </source>
</evidence>
<evidence type="ECO:0000255" key="3">
    <source>
        <dbReference type="PROSITE-ProRule" id="PRU00190"/>
    </source>
</evidence>
<evidence type="ECO:0000255" key="4">
    <source>
        <dbReference type="PROSITE-ProRule" id="PRU00900"/>
    </source>
</evidence>
<evidence type="ECO:0000256" key="5">
    <source>
        <dbReference type="SAM" id="MobiDB-lite"/>
    </source>
</evidence>
<proteinExistence type="inferred from homology"/>
<dbReference type="EC" id="2.1.1.372" evidence="2"/>
<dbReference type="EMBL" id="BA000055">
    <property type="protein sequence ID" value="BAE65291.1"/>
    <property type="molecule type" value="Genomic_DNA"/>
</dbReference>
<dbReference type="SMR" id="Q2TZH4"/>
<dbReference type="STRING" id="510516.Q2TZH4"/>
<dbReference type="EnsemblFungi" id="BAE65291">
    <property type="protein sequence ID" value="BAE65291"/>
    <property type="gene ID" value="AO090011000851"/>
</dbReference>
<dbReference type="VEuPathDB" id="FungiDB:AO090011000851"/>
<dbReference type="HOGENOM" id="CLU_013724_0_0_1"/>
<dbReference type="OMA" id="FANHDCG"/>
<dbReference type="Proteomes" id="UP000006564">
    <property type="component" value="Chromosome 7"/>
</dbReference>
<dbReference type="GO" id="GO:0005694">
    <property type="term" value="C:chromosome"/>
    <property type="evidence" value="ECO:0007669"/>
    <property type="project" value="UniProtKB-SubCell"/>
</dbReference>
<dbReference type="GO" id="GO:0005634">
    <property type="term" value="C:nucleus"/>
    <property type="evidence" value="ECO:0007669"/>
    <property type="project" value="UniProtKB-SubCell"/>
</dbReference>
<dbReference type="GO" id="GO:0140943">
    <property type="term" value="F:histone H4K20 trimethyltransferase activity"/>
    <property type="evidence" value="ECO:0007669"/>
    <property type="project" value="UniProtKB-EC"/>
</dbReference>
<dbReference type="GO" id="GO:0032259">
    <property type="term" value="P:methylation"/>
    <property type="evidence" value="ECO:0007669"/>
    <property type="project" value="UniProtKB-KW"/>
</dbReference>
<dbReference type="CDD" id="cd10524">
    <property type="entry name" value="SET_Suv4-20-like"/>
    <property type="match status" value="1"/>
</dbReference>
<dbReference type="Gene3D" id="1.10.10.1700">
    <property type="entry name" value="Histone-lysine N-methyltransferase"/>
    <property type="match status" value="1"/>
</dbReference>
<dbReference type="Gene3D" id="2.170.270.10">
    <property type="entry name" value="SET domain"/>
    <property type="match status" value="1"/>
</dbReference>
<dbReference type="InterPro" id="IPR041938">
    <property type="entry name" value="Hist-Lys_N-MTase_N"/>
</dbReference>
<dbReference type="InterPro" id="IPR025783">
    <property type="entry name" value="Set9_fungi"/>
</dbReference>
<dbReference type="InterPro" id="IPR001214">
    <property type="entry name" value="SET_dom"/>
</dbReference>
<dbReference type="InterPro" id="IPR046341">
    <property type="entry name" value="SET_dom_sf"/>
</dbReference>
<dbReference type="InterPro" id="IPR039977">
    <property type="entry name" value="Suv4-20/Set9"/>
</dbReference>
<dbReference type="PANTHER" id="PTHR12977:SF4">
    <property type="entry name" value="HISTONE-LYSINE N-METHYLTRANSFERASE KMT5B"/>
    <property type="match status" value="1"/>
</dbReference>
<dbReference type="PANTHER" id="PTHR12977">
    <property type="entry name" value="SUPPRESSOR OF VARIEGATION 4-20-RELATED"/>
    <property type="match status" value="1"/>
</dbReference>
<dbReference type="Pfam" id="PF00856">
    <property type="entry name" value="SET"/>
    <property type="match status" value="1"/>
</dbReference>
<dbReference type="SMART" id="SM00317">
    <property type="entry name" value="SET"/>
    <property type="match status" value="1"/>
</dbReference>
<dbReference type="SUPFAM" id="SSF82199">
    <property type="entry name" value="SET domain"/>
    <property type="match status" value="1"/>
</dbReference>
<dbReference type="PROSITE" id="PS51567">
    <property type="entry name" value="SAM_MT43_SUVAR420_1"/>
    <property type="match status" value="1"/>
</dbReference>
<dbReference type="PROSITE" id="PS50280">
    <property type="entry name" value="SET"/>
    <property type="match status" value="1"/>
</dbReference>
<organism>
    <name type="scientific">Aspergillus oryzae (strain ATCC 42149 / RIB 40)</name>
    <name type="common">Yellow koji mold</name>
    <dbReference type="NCBI Taxonomy" id="510516"/>
    <lineage>
        <taxon>Eukaryota</taxon>
        <taxon>Fungi</taxon>
        <taxon>Dikarya</taxon>
        <taxon>Ascomycota</taxon>
        <taxon>Pezizomycotina</taxon>
        <taxon>Eurotiomycetes</taxon>
        <taxon>Eurotiomycetidae</taxon>
        <taxon>Eurotiales</taxon>
        <taxon>Aspergillaceae</taxon>
        <taxon>Aspergillus</taxon>
        <taxon>Aspergillus subgen. Circumdati</taxon>
    </lineage>
</organism>
<comment type="function">
    <text evidence="2">Histone methyltransferase that trimethylates 'Lys-20' of histone H4 to form H4K20me3.</text>
</comment>
<comment type="catalytic activity">
    <reaction evidence="2 4">
        <text>L-lysyl(20)-[histone H4] + 3 S-adenosyl-L-methionine = N(6),N(6),N(6)-trimethyl-L-lysyl(20)-[histone H4] + 3 S-adenosyl-L-homocysteine + 3 H(+)</text>
        <dbReference type="Rhea" id="RHEA:64456"/>
        <dbReference type="Rhea" id="RHEA-COMP:15554"/>
        <dbReference type="Rhea" id="RHEA-COMP:15998"/>
        <dbReference type="ChEBI" id="CHEBI:15378"/>
        <dbReference type="ChEBI" id="CHEBI:29969"/>
        <dbReference type="ChEBI" id="CHEBI:57856"/>
        <dbReference type="ChEBI" id="CHEBI:59789"/>
        <dbReference type="ChEBI" id="CHEBI:61961"/>
        <dbReference type="EC" id="2.1.1.372"/>
    </reaction>
</comment>
<comment type="subcellular location">
    <subcellularLocation>
        <location evidence="1">Nucleus</location>
    </subcellularLocation>
    <subcellularLocation>
        <location evidence="1">Chromosome</location>
    </subcellularLocation>
</comment>
<comment type="similarity">
    <text evidence="4">Belongs to the class V-like SAM-binding methyltransferase superfamily. Histone-lysine methyltransferase family. Suvar4-20 subfamily.</text>
</comment>
<feature type="chain" id="PRO_0000281799" description="Histone-lysine N-methyltransferase set9">
    <location>
        <begin position="1"/>
        <end position="625"/>
    </location>
</feature>
<feature type="domain" description="SET" evidence="3">
    <location>
        <begin position="120"/>
        <end position="234"/>
    </location>
</feature>
<feature type="region of interest" description="Disordered" evidence="5">
    <location>
        <begin position="260"/>
        <end position="348"/>
    </location>
</feature>
<feature type="region of interest" description="Disordered" evidence="5">
    <location>
        <begin position="368"/>
        <end position="405"/>
    </location>
</feature>
<feature type="region of interest" description="Disordered" evidence="5">
    <location>
        <begin position="432"/>
        <end position="451"/>
    </location>
</feature>
<feature type="region of interest" description="Disordered" evidence="5">
    <location>
        <begin position="457"/>
        <end position="476"/>
    </location>
</feature>
<feature type="region of interest" description="Disordered" evidence="5">
    <location>
        <begin position="582"/>
        <end position="625"/>
    </location>
</feature>
<feature type="compositionally biased region" description="Polar residues" evidence="5">
    <location>
        <begin position="269"/>
        <end position="286"/>
    </location>
</feature>
<feature type="compositionally biased region" description="Polar residues" evidence="5">
    <location>
        <begin position="372"/>
        <end position="386"/>
    </location>
</feature>
<feature type="compositionally biased region" description="Basic residues" evidence="5">
    <location>
        <begin position="462"/>
        <end position="473"/>
    </location>
</feature>
<feature type="compositionally biased region" description="Basic and acidic residues" evidence="5">
    <location>
        <begin position="593"/>
        <end position="610"/>
    </location>
</feature>
<feature type="compositionally biased region" description="Basic residues" evidence="5">
    <location>
        <begin position="611"/>
        <end position="625"/>
    </location>
</feature>
<accession>Q2TZH4</accession>
<protein>
    <recommendedName>
        <fullName>Histone-lysine N-methyltransferase set9</fullName>
        <ecNumber evidence="2">2.1.1.372</ecNumber>
    </recommendedName>
    <alternativeName>
        <fullName>SET domain protein 9</fullName>
    </alternativeName>
</protein>
<keyword id="KW-0156">Chromatin regulator</keyword>
<keyword id="KW-0158">Chromosome</keyword>
<keyword id="KW-0489">Methyltransferase</keyword>
<keyword id="KW-0539">Nucleus</keyword>
<keyword id="KW-1185">Reference proteome</keyword>
<keyword id="KW-0949">S-adenosyl-L-methionine</keyword>
<keyword id="KW-0808">Transferase</keyword>
<name>SET9_ASPOR</name>